<organism>
    <name type="scientific">Neurospora crassa (strain ATCC 24698 / 74-OR23-1A / CBS 708.71 / DSM 1257 / FGSC 987)</name>
    <dbReference type="NCBI Taxonomy" id="367110"/>
    <lineage>
        <taxon>Eukaryota</taxon>
        <taxon>Fungi</taxon>
        <taxon>Dikarya</taxon>
        <taxon>Ascomycota</taxon>
        <taxon>Pezizomycotina</taxon>
        <taxon>Sordariomycetes</taxon>
        <taxon>Sordariomycetidae</taxon>
        <taxon>Sordariales</taxon>
        <taxon>Sordariaceae</taxon>
        <taxon>Neurospora</taxon>
    </lineage>
</organism>
<protein>
    <recommendedName>
        <fullName evidence="1">U1 small nuclear ribonucleoprotein C</fullName>
        <shortName evidence="1">U1 snRNP C</shortName>
        <shortName evidence="1">U1-C</shortName>
        <shortName evidence="1">U1C</shortName>
    </recommendedName>
</protein>
<sequence length="216" mass="21527">MPKFFCDYCDVYLTHDSMSVRKAHNSGRNHLRNVVDYYQQIGHEKAQSVIDSITSSYAAEGQAHANPMLPQNQPGGVPPGLGFPPPGAGVPPFPPFPGGMPPPFPGMPGGAPVPPPGAFGAPGVPGGIPPPGAPGARGMPPMPPFPGMPGAPAGIPGVPPPMPGPGGLPFPPPGGLPFPPPGAGNFPFPPPGAPGAFPGMPPFGAPGQGPPGADKR</sequence>
<comment type="function">
    <text evidence="1">Component of the spliceosomal U1 snRNP, which is essential for recognition of the pre-mRNA 5' splice-site and the subsequent assembly of the spliceosome. U1-C is directly involved in initial 5' splice-site recognition for both constitutive and regulated alternative splicing. The interaction with the 5' splice-site seems to precede base-pairing between the pre-mRNA and the U1 snRNA. Stimulates commitment or early (E) complex formation by stabilizing the base pairing of the 5' end of the U1 snRNA and the 5' splice-site region.</text>
</comment>
<comment type="subunit">
    <text evidence="1">U1 snRNP is composed of the 7 core Sm proteins B/B', D1, D2, D3, E, F and G that assemble in a heptameric protein ring on the Sm site of the small nuclear RNA to form the core snRNP, and at least 3 U1 snRNP-specific proteins U1-70K, U1-A and U1-C. U1-C interacts with U1 snRNA and the 5' splice-site region of the pre-mRNA.</text>
</comment>
<comment type="subcellular location">
    <subcellularLocation>
        <location evidence="1">Nucleus</location>
    </subcellularLocation>
</comment>
<comment type="similarity">
    <text evidence="1">Belongs to the U1 small nuclear ribonucleoprotein C family.</text>
</comment>
<feature type="chain" id="PRO_0000414291" description="U1 small nuclear ribonucleoprotein C">
    <location>
        <begin position="1"/>
        <end position="216"/>
    </location>
</feature>
<feature type="zinc finger region" description="Matrin-type" evidence="1">
    <location>
        <begin position="4"/>
        <end position="36"/>
    </location>
</feature>
<feature type="region of interest" description="Disordered" evidence="2">
    <location>
        <begin position="70"/>
        <end position="89"/>
    </location>
</feature>
<feature type="region of interest" description="Disordered" evidence="2">
    <location>
        <begin position="125"/>
        <end position="216"/>
    </location>
</feature>
<feature type="compositionally biased region" description="Pro residues" evidence="2">
    <location>
        <begin position="140"/>
        <end position="149"/>
    </location>
</feature>
<feature type="compositionally biased region" description="Pro residues" evidence="2">
    <location>
        <begin position="157"/>
        <end position="204"/>
    </location>
</feature>
<proteinExistence type="inferred from homology"/>
<accession>Q1K7T5</accession>
<dbReference type="EMBL" id="CM002240">
    <property type="protein sequence ID" value="EAA32191.1"/>
    <property type="molecule type" value="Genomic_DNA"/>
</dbReference>
<dbReference type="RefSeq" id="XP_961427.1">
    <property type="nucleotide sequence ID" value="XM_956334.2"/>
</dbReference>
<dbReference type="SMR" id="Q1K7T5"/>
<dbReference type="STRING" id="367110.Q1K7T5"/>
<dbReference type="PaxDb" id="5141-EFNCRP00000004143"/>
<dbReference type="EnsemblFungi" id="EAA32191">
    <property type="protein sequence ID" value="EAA32191"/>
    <property type="gene ID" value="NCU01341"/>
</dbReference>
<dbReference type="GeneID" id="3877555"/>
<dbReference type="KEGG" id="ncr:NCU01341"/>
<dbReference type="VEuPathDB" id="FungiDB:NCU01341"/>
<dbReference type="HOGENOM" id="CLU_079697_2_0_1"/>
<dbReference type="InParanoid" id="Q1K7T5"/>
<dbReference type="OMA" id="QMRPPLM"/>
<dbReference type="OrthoDB" id="76567at2759"/>
<dbReference type="Proteomes" id="UP000001805">
    <property type="component" value="Chromosome 2, Linkage Group V"/>
</dbReference>
<dbReference type="GO" id="GO:0000243">
    <property type="term" value="C:commitment complex"/>
    <property type="evidence" value="ECO:0007669"/>
    <property type="project" value="UniProtKB-UniRule"/>
</dbReference>
<dbReference type="GO" id="GO:0005685">
    <property type="term" value="C:U1 snRNP"/>
    <property type="evidence" value="ECO:0000318"/>
    <property type="project" value="GO_Central"/>
</dbReference>
<dbReference type="GO" id="GO:0071004">
    <property type="term" value="C:U2-type prespliceosome"/>
    <property type="evidence" value="ECO:0007669"/>
    <property type="project" value="UniProtKB-UniRule"/>
</dbReference>
<dbReference type="GO" id="GO:0003729">
    <property type="term" value="F:mRNA binding"/>
    <property type="evidence" value="ECO:0007669"/>
    <property type="project" value="UniProtKB-UniRule"/>
</dbReference>
<dbReference type="GO" id="GO:0030627">
    <property type="term" value="F:pre-mRNA 5'-splice site binding"/>
    <property type="evidence" value="ECO:0000318"/>
    <property type="project" value="GO_Central"/>
</dbReference>
<dbReference type="GO" id="GO:0030619">
    <property type="term" value="F:U1 snRNA binding"/>
    <property type="evidence" value="ECO:0007669"/>
    <property type="project" value="UniProtKB-UniRule"/>
</dbReference>
<dbReference type="GO" id="GO:0008270">
    <property type="term" value="F:zinc ion binding"/>
    <property type="evidence" value="ECO:0007669"/>
    <property type="project" value="UniProtKB-UniRule"/>
</dbReference>
<dbReference type="GO" id="GO:0000395">
    <property type="term" value="P:mRNA 5'-splice site recognition"/>
    <property type="evidence" value="ECO:0000318"/>
    <property type="project" value="GO_Central"/>
</dbReference>
<dbReference type="GO" id="GO:0000387">
    <property type="term" value="P:spliceosomal snRNP assembly"/>
    <property type="evidence" value="ECO:0007669"/>
    <property type="project" value="UniProtKB-UniRule"/>
</dbReference>
<dbReference type="FunFam" id="3.30.160.60:FF:000059">
    <property type="entry name" value="U1 small nuclear ribonucleoprotein C"/>
    <property type="match status" value="1"/>
</dbReference>
<dbReference type="Gene3D" id="3.30.160.60">
    <property type="entry name" value="Classic Zinc Finger"/>
    <property type="match status" value="1"/>
</dbReference>
<dbReference type="HAMAP" id="MF_03153">
    <property type="entry name" value="U1_C"/>
    <property type="match status" value="1"/>
</dbReference>
<dbReference type="InterPro" id="IPR000690">
    <property type="entry name" value="Matrin/U1-C_Znf_C2H2"/>
</dbReference>
<dbReference type="InterPro" id="IPR003604">
    <property type="entry name" value="Matrin/U1-like-C_Znf_C2H2"/>
</dbReference>
<dbReference type="InterPro" id="IPR013085">
    <property type="entry name" value="U1-CZ_Znf_C2H2"/>
</dbReference>
<dbReference type="InterPro" id="IPR017340">
    <property type="entry name" value="U1_snRNP-C"/>
</dbReference>
<dbReference type="InterPro" id="IPR036236">
    <property type="entry name" value="Znf_C2H2_sf"/>
</dbReference>
<dbReference type="PANTHER" id="PTHR31148">
    <property type="entry name" value="U1 SMALL NUCLEAR RIBONUCLEOPROTEIN C"/>
    <property type="match status" value="1"/>
</dbReference>
<dbReference type="PANTHER" id="PTHR31148:SF1">
    <property type="entry name" value="U1 SMALL NUCLEAR RIBONUCLEOPROTEIN C"/>
    <property type="match status" value="1"/>
</dbReference>
<dbReference type="Pfam" id="PF06220">
    <property type="entry name" value="zf-U1"/>
    <property type="match status" value="1"/>
</dbReference>
<dbReference type="SMART" id="SM00451">
    <property type="entry name" value="ZnF_U1"/>
    <property type="match status" value="1"/>
</dbReference>
<dbReference type="SUPFAM" id="SSF57667">
    <property type="entry name" value="beta-beta-alpha zinc fingers"/>
    <property type="match status" value="1"/>
</dbReference>
<dbReference type="PROSITE" id="PS50171">
    <property type="entry name" value="ZF_MATRIN"/>
    <property type="match status" value="1"/>
</dbReference>
<evidence type="ECO:0000255" key="1">
    <source>
        <dbReference type="HAMAP-Rule" id="MF_03153"/>
    </source>
</evidence>
<evidence type="ECO:0000256" key="2">
    <source>
        <dbReference type="SAM" id="MobiDB-lite"/>
    </source>
</evidence>
<name>RU1C_NEUCR</name>
<reference key="1">
    <citation type="journal article" date="2003" name="Nature">
        <title>The genome sequence of the filamentous fungus Neurospora crassa.</title>
        <authorList>
            <person name="Galagan J.E."/>
            <person name="Calvo S.E."/>
            <person name="Borkovich K.A."/>
            <person name="Selker E.U."/>
            <person name="Read N.D."/>
            <person name="Jaffe D.B."/>
            <person name="FitzHugh W."/>
            <person name="Ma L.-J."/>
            <person name="Smirnov S."/>
            <person name="Purcell S."/>
            <person name="Rehman B."/>
            <person name="Elkins T."/>
            <person name="Engels R."/>
            <person name="Wang S."/>
            <person name="Nielsen C.B."/>
            <person name="Butler J."/>
            <person name="Endrizzi M."/>
            <person name="Qui D."/>
            <person name="Ianakiev P."/>
            <person name="Bell-Pedersen D."/>
            <person name="Nelson M.A."/>
            <person name="Werner-Washburne M."/>
            <person name="Selitrennikoff C.P."/>
            <person name="Kinsey J.A."/>
            <person name="Braun E.L."/>
            <person name="Zelter A."/>
            <person name="Schulte U."/>
            <person name="Kothe G.O."/>
            <person name="Jedd G."/>
            <person name="Mewes H.-W."/>
            <person name="Staben C."/>
            <person name="Marcotte E."/>
            <person name="Greenberg D."/>
            <person name="Roy A."/>
            <person name="Foley K."/>
            <person name="Naylor J."/>
            <person name="Stange-Thomann N."/>
            <person name="Barrett R."/>
            <person name="Gnerre S."/>
            <person name="Kamal M."/>
            <person name="Kamvysselis M."/>
            <person name="Mauceli E.W."/>
            <person name="Bielke C."/>
            <person name="Rudd S."/>
            <person name="Frishman D."/>
            <person name="Krystofova S."/>
            <person name="Rasmussen C."/>
            <person name="Metzenberg R.L."/>
            <person name="Perkins D.D."/>
            <person name="Kroken S."/>
            <person name="Cogoni C."/>
            <person name="Macino G."/>
            <person name="Catcheside D.E.A."/>
            <person name="Li W."/>
            <person name="Pratt R.J."/>
            <person name="Osmani S.A."/>
            <person name="DeSouza C.P.C."/>
            <person name="Glass N.L."/>
            <person name="Orbach M.J."/>
            <person name="Berglund J.A."/>
            <person name="Voelker R."/>
            <person name="Yarden O."/>
            <person name="Plamann M."/>
            <person name="Seiler S."/>
            <person name="Dunlap J.C."/>
            <person name="Radford A."/>
            <person name="Aramayo R."/>
            <person name="Natvig D.O."/>
            <person name="Alex L.A."/>
            <person name="Mannhaupt G."/>
            <person name="Ebbole D.J."/>
            <person name="Freitag M."/>
            <person name="Paulsen I."/>
            <person name="Sachs M.S."/>
            <person name="Lander E.S."/>
            <person name="Nusbaum C."/>
            <person name="Birren B.W."/>
        </authorList>
    </citation>
    <scope>NUCLEOTIDE SEQUENCE [LARGE SCALE GENOMIC DNA]</scope>
    <source>
        <strain>ATCC 24698 / 74-OR23-1A / CBS 708.71 / DSM 1257 / FGSC 987</strain>
    </source>
</reference>
<gene>
    <name type="ORF">NCU01341</name>
</gene>
<keyword id="KW-0479">Metal-binding</keyword>
<keyword id="KW-0539">Nucleus</keyword>
<keyword id="KW-1185">Reference proteome</keyword>
<keyword id="KW-0687">Ribonucleoprotein</keyword>
<keyword id="KW-0694">RNA-binding</keyword>
<keyword id="KW-0862">Zinc</keyword>
<keyword id="KW-0863">Zinc-finger</keyword>